<organism>
    <name type="scientific">Shewanella oneidensis (strain ATCC 700550 / JCM 31522 / CIP 106686 / LMG 19005 / NCIMB 14063 / MR-1)</name>
    <dbReference type="NCBI Taxonomy" id="211586"/>
    <lineage>
        <taxon>Bacteria</taxon>
        <taxon>Pseudomonadati</taxon>
        <taxon>Pseudomonadota</taxon>
        <taxon>Gammaproteobacteria</taxon>
        <taxon>Alteromonadales</taxon>
        <taxon>Shewanellaceae</taxon>
        <taxon>Shewanella</taxon>
    </lineage>
</organism>
<evidence type="ECO:0000255" key="1">
    <source>
        <dbReference type="HAMAP-Rule" id="MF_00791"/>
    </source>
</evidence>
<evidence type="ECO:0007829" key="2">
    <source>
        <dbReference type="PDB" id="1TZA"/>
    </source>
</evidence>
<reference key="1">
    <citation type="journal article" date="2002" name="Nat. Biotechnol.">
        <title>Genome sequence of the dissimilatory metal ion-reducing bacterium Shewanella oneidensis.</title>
        <authorList>
            <person name="Heidelberg J.F."/>
            <person name="Paulsen I.T."/>
            <person name="Nelson K.E."/>
            <person name="Gaidos E.J."/>
            <person name="Nelson W.C."/>
            <person name="Read T.D."/>
            <person name="Eisen J.A."/>
            <person name="Seshadri R."/>
            <person name="Ward N.L."/>
            <person name="Methe B.A."/>
            <person name="Clayton R.A."/>
            <person name="Meyer T."/>
            <person name="Tsapin A."/>
            <person name="Scott J."/>
            <person name="Beanan M.J."/>
            <person name="Brinkac L.M."/>
            <person name="Daugherty S.C."/>
            <person name="DeBoy R.T."/>
            <person name="Dodson R.J."/>
            <person name="Durkin A.S."/>
            <person name="Haft D.H."/>
            <person name="Kolonay J.F."/>
            <person name="Madupu R."/>
            <person name="Peterson J.D."/>
            <person name="Umayam L.A."/>
            <person name="White O."/>
            <person name="Wolf A.M."/>
            <person name="Vamathevan J.J."/>
            <person name="Weidman J.F."/>
            <person name="Impraim M."/>
            <person name="Lee K."/>
            <person name="Berry K.J."/>
            <person name="Lee C."/>
            <person name="Mueller J."/>
            <person name="Khouri H.M."/>
            <person name="Gill J."/>
            <person name="Utterback T.R."/>
            <person name="McDonald L.A."/>
            <person name="Feldblyum T.V."/>
            <person name="Smith H.O."/>
            <person name="Venter J.C."/>
            <person name="Nealson K.H."/>
            <person name="Fraser C.M."/>
        </authorList>
    </citation>
    <scope>NUCLEOTIDE SEQUENCE [LARGE SCALE GENOMIC DNA]</scope>
    <source>
        <strain>ATCC 700550 / JCM 31522 / CIP 106686 / LMG 19005 / NCIMB 14063 / MR-1</strain>
    </source>
</reference>
<protein>
    <recommendedName>
        <fullName evidence="1">Protein ApaG</fullName>
    </recommendedName>
</protein>
<proteinExistence type="evidence at protein level"/>
<gene>
    <name evidence="1" type="primary">apaG</name>
    <name type="ordered locus">SO_3640</name>
</gene>
<keyword id="KW-0002">3D-structure</keyword>
<keyword id="KW-1185">Reference proteome</keyword>
<feature type="chain" id="PRO_0000197963" description="Protein ApaG">
    <location>
        <begin position="1"/>
        <end position="126"/>
    </location>
</feature>
<feature type="domain" description="ApaG" evidence="1">
    <location>
        <begin position="2"/>
        <end position="126"/>
    </location>
</feature>
<feature type="helix" evidence="2">
    <location>
        <begin position="4"/>
        <end position="6"/>
    </location>
</feature>
<feature type="strand" evidence="2">
    <location>
        <begin position="8"/>
        <end position="19"/>
    </location>
</feature>
<feature type="strand" evidence="2">
    <location>
        <begin position="28"/>
        <end position="38"/>
    </location>
</feature>
<feature type="strand" evidence="2">
    <location>
        <begin position="40"/>
        <end position="42"/>
    </location>
</feature>
<feature type="strand" evidence="2">
    <location>
        <begin position="44"/>
        <end position="55"/>
    </location>
</feature>
<feature type="strand" evidence="2">
    <location>
        <begin position="60"/>
        <end position="68"/>
    </location>
</feature>
<feature type="strand" evidence="2">
    <location>
        <begin position="79"/>
        <end position="104"/>
    </location>
</feature>
<feature type="strand" evidence="2">
    <location>
        <begin position="109"/>
        <end position="120"/>
    </location>
</feature>
<dbReference type="EMBL" id="AE014299">
    <property type="protein sequence ID" value="AAN56626.1"/>
    <property type="molecule type" value="Genomic_DNA"/>
</dbReference>
<dbReference type="RefSeq" id="NP_719182.1">
    <property type="nucleotide sequence ID" value="NC_004347.2"/>
</dbReference>
<dbReference type="RefSeq" id="WP_011073443.1">
    <property type="nucleotide sequence ID" value="NC_004347.2"/>
</dbReference>
<dbReference type="PDB" id="1TZA">
    <property type="method" value="X-ray"/>
    <property type="resolution" value="2.40 A"/>
    <property type="chains" value="A/B=1-126"/>
</dbReference>
<dbReference type="PDBsum" id="1TZA"/>
<dbReference type="SMR" id="Q8EB92"/>
<dbReference type="STRING" id="211586.SO_3640"/>
<dbReference type="PaxDb" id="211586-SO_3640"/>
<dbReference type="KEGG" id="son:SO_3640"/>
<dbReference type="PATRIC" id="fig|211586.12.peg.3529"/>
<dbReference type="eggNOG" id="COG2967">
    <property type="taxonomic scope" value="Bacteria"/>
</dbReference>
<dbReference type="HOGENOM" id="CLU_128074_0_0_6"/>
<dbReference type="OrthoDB" id="9795226at2"/>
<dbReference type="PhylomeDB" id="Q8EB92"/>
<dbReference type="BioCyc" id="SONE211586:G1GMP-3391-MONOMER"/>
<dbReference type="EvolutionaryTrace" id="Q8EB92"/>
<dbReference type="Proteomes" id="UP000008186">
    <property type="component" value="Chromosome"/>
</dbReference>
<dbReference type="GO" id="GO:0070987">
    <property type="term" value="P:error-free translesion synthesis"/>
    <property type="evidence" value="ECO:0000318"/>
    <property type="project" value="GO_Central"/>
</dbReference>
<dbReference type="Gene3D" id="2.60.40.1470">
    <property type="entry name" value="ApaG domain"/>
    <property type="match status" value="1"/>
</dbReference>
<dbReference type="HAMAP" id="MF_00791">
    <property type="entry name" value="ApaG"/>
    <property type="match status" value="1"/>
</dbReference>
<dbReference type="InterPro" id="IPR007474">
    <property type="entry name" value="ApaG_domain"/>
</dbReference>
<dbReference type="InterPro" id="IPR036767">
    <property type="entry name" value="ApaG_sf"/>
</dbReference>
<dbReference type="InterPro" id="IPR023065">
    <property type="entry name" value="Uncharacterised_ApaG"/>
</dbReference>
<dbReference type="NCBIfam" id="NF003967">
    <property type="entry name" value="PRK05461.1"/>
    <property type="match status" value="1"/>
</dbReference>
<dbReference type="PANTHER" id="PTHR14289">
    <property type="entry name" value="F-BOX ONLY PROTEIN 3"/>
    <property type="match status" value="1"/>
</dbReference>
<dbReference type="PANTHER" id="PTHR14289:SF16">
    <property type="entry name" value="POLYMERASE DELTA-INTERACTING PROTEIN 2"/>
    <property type="match status" value="1"/>
</dbReference>
<dbReference type="Pfam" id="PF04379">
    <property type="entry name" value="DUF525"/>
    <property type="match status" value="1"/>
</dbReference>
<dbReference type="SUPFAM" id="SSF110069">
    <property type="entry name" value="ApaG-like"/>
    <property type="match status" value="1"/>
</dbReference>
<dbReference type="PROSITE" id="PS51087">
    <property type="entry name" value="APAG"/>
    <property type="match status" value="1"/>
</dbReference>
<sequence>MSALDNSIRVEVKTEYIEQQSSPEDEKYLFSYTITIINLGEQAAKLETRHWIITDANGKTSEVQGAGVVGETPTIPPNTAYQYTSGTVLDTPFGIMYGTYGMVSESGEHFNAIIKPFRLATPGLLH</sequence>
<accession>Q8EB92</accession>
<name>APAG_SHEON</name>